<feature type="chain" id="PRO_0000331076" description="SsrA-binding protein">
    <location>
        <begin position="1"/>
        <end position="164"/>
    </location>
</feature>
<feature type="region of interest" description="Disordered" evidence="2">
    <location>
        <begin position="141"/>
        <end position="164"/>
    </location>
</feature>
<feature type="compositionally biased region" description="Basic and acidic residues" evidence="2">
    <location>
        <begin position="145"/>
        <end position="158"/>
    </location>
</feature>
<gene>
    <name evidence="1" type="primary">smpB</name>
    <name type="ordered locus">P9215_18901</name>
</gene>
<comment type="function">
    <text evidence="1">Required for rescue of stalled ribosomes mediated by trans-translation. Binds to transfer-messenger RNA (tmRNA), required for stable association of tmRNA with ribosomes. tmRNA and SmpB together mimic tRNA shape, replacing the anticodon stem-loop with SmpB. tmRNA is encoded by the ssrA gene; the 2 termini fold to resemble tRNA(Ala) and it encodes a 'tag peptide', a short internal open reading frame. During trans-translation Ala-aminoacylated tmRNA acts like a tRNA, entering the A-site of stalled ribosomes, displacing the stalled mRNA. The ribosome then switches to translate the ORF on the tmRNA; the nascent peptide is terminated with the 'tag peptide' encoded by the tmRNA and targeted for degradation. The ribosome is freed to recommence translation, which seems to be the essential function of trans-translation.</text>
</comment>
<comment type="subcellular location">
    <subcellularLocation>
        <location evidence="1">Cytoplasm</location>
    </subcellularLocation>
    <text evidence="1">The tmRNA-SmpB complex associates with stalled 70S ribosomes.</text>
</comment>
<comment type="similarity">
    <text evidence="1">Belongs to the SmpB family.</text>
</comment>
<protein>
    <recommendedName>
        <fullName evidence="1">SsrA-binding protein</fullName>
    </recommendedName>
    <alternativeName>
        <fullName evidence="1">Small protein B</fullName>
    </alternativeName>
</protein>
<evidence type="ECO:0000255" key="1">
    <source>
        <dbReference type="HAMAP-Rule" id="MF_00023"/>
    </source>
</evidence>
<evidence type="ECO:0000256" key="2">
    <source>
        <dbReference type="SAM" id="MobiDB-lite"/>
    </source>
</evidence>
<organism>
    <name type="scientific">Prochlorococcus marinus (strain MIT 9215)</name>
    <dbReference type="NCBI Taxonomy" id="93060"/>
    <lineage>
        <taxon>Bacteria</taxon>
        <taxon>Bacillati</taxon>
        <taxon>Cyanobacteriota</taxon>
        <taxon>Cyanophyceae</taxon>
        <taxon>Synechococcales</taxon>
        <taxon>Prochlorococcaceae</taxon>
        <taxon>Prochlorococcus</taxon>
    </lineage>
</organism>
<accession>A8G7C2</accession>
<proteinExistence type="inferred from homology"/>
<keyword id="KW-0963">Cytoplasm</keyword>
<keyword id="KW-0694">RNA-binding</keyword>
<dbReference type="EMBL" id="CP000825">
    <property type="protein sequence ID" value="ABV51503.1"/>
    <property type="molecule type" value="Genomic_DNA"/>
</dbReference>
<dbReference type="RefSeq" id="WP_012008499.1">
    <property type="nucleotide sequence ID" value="NC_009840.1"/>
</dbReference>
<dbReference type="SMR" id="A8G7C2"/>
<dbReference type="STRING" id="93060.P9215_18901"/>
<dbReference type="KEGG" id="pmh:P9215_18901"/>
<dbReference type="eggNOG" id="COG0691">
    <property type="taxonomic scope" value="Bacteria"/>
</dbReference>
<dbReference type="HOGENOM" id="CLU_108953_0_1_3"/>
<dbReference type="OrthoDB" id="9805462at2"/>
<dbReference type="Proteomes" id="UP000002014">
    <property type="component" value="Chromosome"/>
</dbReference>
<dbReference type="GO" id="GO:0005829">
    <property type="term" value="C:cytosol"/>
    <property type="evidence" value="ECO:0007669"/>
    <property type="project" value="TreeGrafter"/>
</dbReference>
<dbReference type="GO" id="GO:0003723">
    <property type="term" value="F:RNA binding"/>
    <property type="evidence" value="ECO:0007669"/>
    <property type="project" value="UniProtKB-UniRule"/>
</dbReference>
<dbReference type="GO" id="GO:0070929">
    <property type="term" value="P:trans-translation"/>
    <property type="evidence" value="ECO:0007669"/>
    <property type="project" value="UniProtKB-UniRule"/>
</dbReference>
<dbReference type="CDD" id="cd09294">
    <property type="entry name" value="SmpB"/>
    <property type="match status" value="1"/>
</dbReference>
<dbReference type="Gene3D" id="2.40.280.10">
    <property type="match status" value="1"/>
</dbReference>
<dbReference type="HAMAP" id="MF_00023">
    <property type="entry name" value="SmpB"/>
    <property type="match status" value="1"/>
</dbReference>
<dbReference type="InterPro" id="IPR023620">
    <property type="entry name" value="SmpB"/>
</dbReference>
<dbReference type="InterPro" id="IPR000037">
    <property type="entry name" value="SsrA-bd_prot"/>
</dbReference>
<dbReference type="InterPro" id="IPR020081">
    <property type="entry name" value="SsrA-bd_prot_CS"/>
</dbReference>
<dbReference type="NCBIfam" id="NF003843">
    <property type="entry name" value="PRK05422.1"/>
    <property type="match status" value="1"/>
</dbReference>
<dbReference type="NCBIfam" id="TIGR00086">
    <property type="entry name" value="smpB"/>
    <property type="match status" value="1"/>
</dbReference>
<dbReference type="PANTHER" id="PTHR30308:SF2">
    <property type="entry name" value="SSRA-BINDING PROTEIN"/>
    <property type="match status" value="1"/>
</dbReference>
<dbReference type="PANTHER" id="PTHR30308">
    <property type="entry name" value="TMRNA-BINDING COMPONENT OF TRANS-TRANSLATION TAGGING COMPLEX"/>
    <property type="match status" value="1"/>
</dbReference>
<dbReference type="Pfam" id="PF01668">
    <property type="entry name" value="SmpB"/>
    <property type="match status" value="1"/>
</dbReference>
<dbReference type="SUPFAM" id="SSF74982">
    <property type="entry name" value="Small protein B (SmpB)"/>
    <property type="match status" value="1"/>
</dbReference>
<dbReference type="PROSITE" id="PS01317">
    <property type="entry name" value="SSRP"/>
    <property type="match status" value="1"/>
</dbReference>
<reference key="1">
    <citation type="journal article" date="2007" name="PLoS Genet.">
        <title>Patterns and implications of gene gain and loss in the evolution of Prochlorococcus.</title>
        <authorList>
            <person name="Kettler G.C."/>
            <person name="Martiny A.C."/>
            <person name="Huang K."/>
            <person name="Zucker J."/>
            <person name="Coleman M.L."/>
            <person name="Rodrigue S."/>
            <person name="Chen F."/>
            <person name="Lapidus A."/>
            <person name="Ferriera S."/>
            <person name="Johnson J."/>
            <person name="Steglich C."/>
            <person name="Church G.M."/>
            <person name="Richardson P."/>
            <person name="Chisholm S.W."/>
        </authorList>
    </citation>
    <scope>NUCLEOTIDE SEQUENCE [LARGE SCALE GENOMIC DNA]</scope>
    <source>
        <strain>MIT 9215</strain>
    </source>
</reference>
<name>SSRP_PROM2</name>
<sequence length="164" mass="18844">MAKTSNKVKRNANKANIFKLLADNRYAKFQYEISETIEAGIELLGTEVKSIRNGKANLRDGYCSFRDNEILLLNVHISPHKNVGSFFNHDPLRNRKLLLHKKEIIKMKSSTEKKGMTIVPLNLYLKGSWIKLTIGVGKGKKLHDKRQDEKQKSIKREINSALKR</sequence>